<evidence type="ECO:0000255" key="1">
    <source>
        <dbReference type="HAMAP-Rule" id="MF_01342"/>
    </source>
</evidence>
<evidence type="ECO:0000305" key="2"/>
<gene>
    <name evidence="1" type="primary">rplP</name>
    <name type="ordered locus">LEPBI_I1957</name>
</gene>
<organism>
    <name type="scientific">Leptospira biflexa serovar Patoc (strain Patoc 1 / ATCC 23582 / Paris)</name>
    <dbReference type="NCBI Taxonomy" id="456481"/>
    <lineage>
        <taxon>Bacteria</taxon>
        <taxon>Pseudomonadati</taxon>
        <taxon>Spirochaetota</taxon>
        <taxon>Spirochaetia</taxon>
        <taxon>Leptospirales</taxon>
        <taxon>Leptospiraceae</taxon>
        <taxon>Leptospira</taxon>
    </lineage>
</organism>
<protein>
    <recommendedName>
        <fullName evidence="1">Large ribosomal subunit protein uL16</fullName>
    </recommendedName>
    <alternativeName>
        <fullName evidence="2">50S ribosomal protein L16</fullName>
    </alternativeName>
</protein>
<name>RL16_LEPBP</name>
<reference key="1">
    <citation type="journal article" date="2008" name="PLoS ONE">
        <title>Genome sequence of the saprophyte Leptospira biflexa provides insights into the evolution of Leptospira and the pathogenesis of leptospirosis.</title>
        <authorList>
            <person name="Picardeau M."/>
            <person name="Bulach D.M."/>
            <person name="Bouchier C."/>
            <person name="Zuerner R.L."/>
            <person name="Zidane N."/>
            <person name="Wilson P.J."/>
            <person name="Creno S."/>
            <person name="Kuczek E.S."/>
            <person name="Bommezzadri S."/>
            <person name="Davis J.C."/>
            <person name="McGrath A."/>
            <person name="Johnson M.J."/>
            <person name="Boursaux-Eude C."/>
            <person name="Seemann T."/>
            <person name="Rouy Z."/>
            <person name="Coppel R.L."/>
            <person name="Rood J.I."/>
            <person name="Lajus A."/>
            <person name="Davies J.K."/>
            <person name="Medigue C."/>
            <person name="Adler B."/>
        </authorList>
    </citation>
    <scope>NUCLEOTIDE SEQUENCE [LARGE SCALE GENOMIC DNA]</scope>
    <source>
        <strain>Patoc 1 / ATCC 23582 / Paris</strain>
    </source>
</reference>
<comment type="function">
    <text evidence="1">Binds 23S rRNA and is also seen to make contacts with the A and possibly P site tRNAs.</text>
</comment>
<comment type="subunit">
    <text evidence="1">Part of the 50S ribosomal subunit.</text>
</comment>
<comment type="similarity">
    <text evidence="1">Belongs to the universal ribosomal protein uL16 family.</text>
</comment>
<keyword id="KW-1185">Reference proteome</keyword>
<keyword id="KW-0687">Ribonucleoprotein</keyword>
<keyword id="KW-0689">Ribosomal protein</keyword>
<keyword id="KW-0694">RNA-binding</keyword>
<keyword id="KW-0699">rRNA-binding</keyword>
<keyword id="KW-0820">tRNA-binding</keyword>
<sequence length="137" mass="15581">MLAPKRVKFRKRQRGRLKGKDERGSYVAFGEFGLKAISSGRITARQIEAARITINRQVKRGGKLWIRIFPHLPITKKPAETRMGKGKGNPEFWIAEIRPGRVLFEMAGVDEETARKALHLAAFKLPVETSFVKRNVL</sequence>
<feature type="chain" id="PRO_1000142990" description="Large ribosomal subunit protein uL16">
    <location>
        <begin position="1"/>
        <end position="137"/>
    </location>
</feature>
<accession>B0SSH0</accession>
<dbReference type="EMBL" id="CP000786">
    <property type="protein sequence ID" value="ABZ98060.1"/>
    <property type="molecule type" value="Genomic_DNA"/>
</dbReference>
<dbReference type="RefSeq" id="WP_012388934.1">
    <property type="nucleotide sequence ID" value="NC_010602.1"/>
</dbReference>
<dbReference type="SMR" id="B0SSH0"/>
<dbReference type="STRING" id="456481.LEPBI_I1957"/>
<dbReference type="KEGG" id="lbi:LEPBI_I1957"/>
<dbReference type="HOGENOM" id="CLU_078858_2_1_12"/>
<dbReference type="OrthoDB" id="9802589at2"/>
<dbReference type="BioCyc" id="LBIF456481:LEPBI_RS09670-MONOMER"/>
<dbReference type="Proteomes" id="UP000001847">
    <property type="component" value="Chromosome I"/>
</dbReference>
<dbReference type="GO" id="GO:0022625">
    <property type="term" value="C:cytosolic large ribosomal subunit"/>
    <property type="evidence" value="ECO:0007669"/>
    <property type="project" value="TreeGrafter"/>
</dbReference>
<dbReference type="GO" id="GO:0019843">
    <property type="term" value="F:rRNA binding"/>
    <property type="evidence" value="ECO:0007669"/>
    <property type="project" value="UniProtKB-UniRule"/>
</dbReference>
<dbReference type="GO" id="GO:0003735">
    <property type="term" value="F:structural constituent of ribosome"/>
    <property type="evidence" value="ECO:0007669"/>
    <property type="project" value="InterPro"/>
</dbReference>
<dbReference type="GO" id="GO:0000049">
    <property type="term" value="F:tRNA binding"/>
    <property type="evidence" value="ECO:0007669"/>
    <property type="project" value="UniProtKB-KW"/>
</dbReference>
<dbReference type="GO" id="GO:0006412">
    <property type="term" value="P:translation"/>
    <property type="evidence" value="ECO:0007669"/>
    <property type="project" value="UniProtKB-UniRule"/>
</dbReference>
<dbReference type="CDD" id="cd01433">
    <property type="entry name" value="Ribosomal_L16_L10e"/>
    <property type="match status" value="1"/>
</dbReference>
<dbReference type="FunFam" id="3.90.1170.10:FF:000001">
    <property type="entry name" value="50S ribosomal protein L16"/>
    <property type="match status" value="1"/>
</dbReference>
<dbReference type="Gene3D" id="3.90.1170.10">
    <property type="entry name" value="Ribosomal protein L10e/L16"/>
    <property type="match status" value="1"/>
</dbReference>
<dbReference type="HAMAP" id="MF_01342">
    <property type="entry name" value="Ribosomal_uL16"/>
    <property type="match status" value="1"/>
</dbReference>
<dbReference type="InterPro" id="IPR047873">
    <property type="entry name" value="Ribosomal_uL16"/>
</dbReference>
<dbReference type="InterPro" id="IPR000114">
    <property type="entry name" value="Ribosomal_uL16_bact-type"/>
</dbReference>
<dbReference type="InterPro" id="IPR020798">
    <property type="entry name" value="Ribosomal_uL16_CS"/>
</dbReference>
<dbReference type="InterPro" id="IPR016180">
    <property type="entry name" value="Ribosomal_uL16_dom"/>
</dbReference>
<dbReference type="InterPro" id="IPR036920">
    <property type="entry name" value="Ribosomal_uL16_sf"/>
</dbReference>
<dbReference type="NCBIfam" id="TIGR01164">
    <property type="entry name" value="rplP_bact"/>
    <property type="match status" value="1"/>
</dbReference>
<dbReference type="PANTHER" id="PTHR12220">
    <property type="entry name" value="50S/60S RIBOSOMAL PROTEIN L16"/>
    <property type="match status" value="1"/>
</dbReference>
<dbReference type="PANTHER" id="PTHR12220:SF13">
    <property type="entry name" value="LARGE RIBOSOMAL SUBUNIT PROTEIN UL16M"/>
    <property type="match status" value="1"/>
</dbReference>
<dbReference type="Pfam" id="PF00252">
    <property type="entry name" value="Ribosomal_L16"/>
    <property type="match status" value="1"/>
</dbReference>
<dbReference type="PRINTS" id="PR00060">
    <property type="entry name" value="RIBOSOMALL16"/>
</dbReference>
<dbReference type="SUPFAM" id="SSF54686">
    <property type="entry name" value="Ribosomal protein L16p/L10e"/>
    <property type="match status" value="1"/>
</dbReference>
<dbReference type="PROSITE" id="PS00586">
    <property type="entry name" value="RIBOSOMAL_L16_1"/>
    <property type="match status" value="1"/>
</dbReference>
<dbReference type="PROSITE" id="PS00701">
    <property type="entry name" value="RIBOSOMAL_L16_2"/>
    <property type="match status" value="1"/>
</dbReference>
<proteinExistence type="inferred from homology"/>